<feature type="chain" id="PRO_1000165321" description="Small ribosomal subunit protein uS8">
    <location>
        <begin position="1"/>
        <end position="131"/>
    </location>
</feature>
<sequence length="131" mass="14235">MQITDAIADMLTRIRNAGSAKHESVDIPASNLKRSIANILLEEGYIKNFEEISDGKQGVLRVNLKYNNKQNVITGIKRISKPGLRVYAGKDQLPKVLGGLGIAVISTSKGIMTDKKARVEGIGGEVLAFVW</sequence>
<reference key="1">
    <citation type="submission" date="2009-01" db="EMBL/GenBank/DDBJ databases">
        <title>Complete sequence of Clostridium cellulolyticum H10.</title>
        <authorList>
            <consortium name="US DOE Joint Genome Institute"/>
            <person name="Lucas S."/>
            <person name="Copeland A."/>
            <person name="Lapidus A."/>
            <person name="Glavina del Rio T."/>
            <person name="Dalin E."/>
            <person name="Tice H."/>
            <person name="Bruce D."/>
            <person name="Goodwin L."/>
            <person name="Pitluck S."/>
            <person name="Chertkov O."/>
            <person name="Saunders E."/>
            <person name="Brettin T."/>
            <person name="Detter J.C."/>
            <person name="Han C."/>
            <person name="Larimer F."/>
            <person name="Land M."/>
            <person name="Hauser L."/>
            <person name="Kyrpides N."/>
            <person name="Ivanova N."/>
            <person name="Zhou J."/>
            <person name="Richardson P."/>
        </authorList>
    </citation>
    <scope>NUCLEOTIDE SEQUENCE [LARGE SCALE GENOMIC DNA]</scope>
    <source>
        <strain>ATCC 35319 / DSM 5812 / JCM 6584 / H10</strain>
    </source>
</reference>
<name>RS8_RUMCH</name>
<organism>
    <name type="scientific">Ruminiclostridium cellulolyticum (strain ATCC 35319 / DSM 5812 / JCM 6584 / H10)</name>
    <name type="common">Clostridium cellulolyticum</name>
    <dbReference type="NCBI Taxonomy" id="394503"/>
    <lineage>
        <taxon>Bacteria</taxon>
        <taxon>Bacillati</taxon>
        <taxon>Bacillota</taxon>
        <taxon>Clostridia</taxon>
        <taxon>Eubacteriales</taxon>
        <taxon>Oscillospiraceae</taxon>
        <taxon>Ruminiclostridium</taxon>
    </lineage>
</organism>
<dbReference type="EMBL" id="CP001348">
    <property type="protein sequence ID" value="ACL75150.1"/>
    <property type="molecule type" value="Genomic_DNA"/>
</dbReference>
<dbReference type="RefSeq" id="WP_015924315.1">
    <property type="nucleotide sequence ID" value="NC_011898.1"/>
</dbReference>
<dbReference type="SMR" id="B8I7Z3"/>
<dbReference type="STRING" id="394503.Ccel_0772"/>
<dbReference type="KEGG" id="cce:Ccel_0772"/>
<dbReference type="eggNOG" id="COG0096">
    <property type="taxonomic scope" value="Bacteria"/>
</dbReference>
<dbReference type="HOGENOM" id="CLU_098428_0_2_9"/>
<dbReference type="OrthoDB" id="9802617at2"/>
<dbReference type="Proteomes" id="UP000001349">
    <property type="component" value="Chromosome"/>
</dbReference>
<dbReference type="GO" id="GO:1990904">
    <property type="term" value="C:ribonucleoprotein complex"/>
    <property type="evidence" value="ECO:0007669"/>
    <property type="project" value="UniProtKB-KW"/>
</dbReference>
<dbReference type="GO" id="GO:0005840">
    <property type="term" value="C:ribosome"/>
    <property type="evidence" value="ECO:0007669"/>
    <property type="project" value="UniProtKB-KW"/>
</dbReference>
<dbReference type="GO" id="GO:0019843">
    <property type="term" value="F:rRNA binding"/>
    <property type="evidence" value="ECO:0007669"/>
    <property type="project" value="UniProtKB-UniRule"/>
</dbReference>
<dbReference type="GO" id="GO:0003735">
    <property type="term" value="F:structural constituent of ribosome"/>
    <property type="evidence" value="ECO:0007669"/>
    <property type="project" value="InterPro"/>
</dbReference>
<dbReference type="GO" id="GO:0006412">
    <property type="term" value="P:translation"/>
    <property type="evidence" value="ECO:0007669"/>
    <property type="project" value="UniProtKB-UniRule"/>
</dbReference>
<dbReference type="FunFam" id="3.30.1370.30:FF:000002">
    <property type="entry name" value="30S ribosomal protein S8"/>
    <property type="match status" value="1"/>
</dbReference>
<dbReference type="FunFam" id="3.30.1490.10:FF:000001">
    <property type="entry name" value="30S ribosomal protein S8"/>
    <property type="match status" value="1"/>
</dbReference>
<dbReference type="Gene3D" id="3.30.1370.30">
    <property type="match status" value="1"/>
</dbReference>
<dbReference type="Gene3D" id="3.30.1490.10">
    <property type="match status" value="1"/>
</dbReference>
<dbReference type="HAMAP" id="MF_01302_B">
    <property type="entry name" value="Ribosomal_uS8_B"/>
    <property type="match status" value="1"/>
</dbReference>
<dbReference type="InterPro" id="IPR000630">
    <property type="entry name" value="Ribosomal_uS8"/>
</dbReference>
<dbReference type="InterPro" id="IPR047863">
    <property type="entry name" value="Ribosomal_uS8_CS"/>
</dbReference>
<dbReference type="InterPro" id="IPR035987">
    <property type="entry name" value="Ribosomal_uS8_sf"/>
</dbReference>
<dbReference type="NCBIfam" id="NF001109">
    <property type="entry name" value="PRK00136.1"/>
    <property type="match status" value="1"/>
</dbReference>
<dbReference type="PANTHER" id="PTHR11758">
    <property type="entry name" value="40S RIBOSOMAL PROTEIN S15A"/>
    <property type="match status" value="1"/>
</dbReference>
<dbReference type="Pfam" id="PF00410">
    <property type="entry name" value="Ribosomal_S8"/>
    <property type="match status" value="1"/>
</dbReference>
<dbReference type="SUPFAM" id="SSF56047">
    <property type="entry name" value="Ribosomal protein S8"/>
    <property type="match status" value="1"/>
</dbReference>
<dbReference type="PROSITE" id="PS00053">
    <property type="entry name" value="RIBOSOMAL_S8"/>
    <property type="match status" value="1"/>
</dbReference>
<comment type="function">
    <text evidence="1">One of the primary rRNA binding proteins, it binds directly to 16S rRNA central domain where it helps coordinate assembly of the platform of the 30S subunit.</text>
</comment>
<comment type="subunit">
    <text evidence="1">Part of the 30S ribosomal subunit. Contacts proteins S5 and S12.</text>
</comment>
<comment type="similarity">
    <text evidence="1">Belongs to the universal ribosomal protein uS8 family.</text>
</comment>
<proteinExistence type="inferred from homology"/>
<protein>
    <recommendedName>
        <fullName evidence="1">Small ribosomal subunit protein uS8</fullName>
    </recommendedName>
    <alternativeName>
        <fullName evidence="2">30S ribosomal protein S8</fullName>
    </alternativeName>
</protein>
<evidence type="ECO:0000255" key="1">
    <source>
        <dbReference type="HAMAP-Rule" id="MF_01302"/>
    </source>
</evidence>
<evidence type="ECO:0000305" key="2"/>
<accession>B8I7Z3</accession>
<gene>
    <name evidence="1" type="primary">rpsH</name>
    <name type="ordered locus">Ccel_0772</name>
</gene>
<keyword id="KW-1185">Reference proteome</keyword>
<keyword id="KW-0687">Ribonucleoprotein</keyword>
<keyword id="KW-0689">Ribosomal protein</keyword>
<keyword id="KW-0694">RNA-binding</keyword>
<keyword id="KW-0699">rRNA-binding</keyword>